<proteinExistence type="evidence at protein level"/>
<protein>
    <recommendedName>
        <fullName evidence="1">Methionine aminopeptidase 2</fullName>
        <shortName evidence="1">MAP 2</shortName>
        <shortName evidence="1">MetAP 2</shortName>
        <ecNumber evidence="1">3.4.11.18</ecNumber>
    </recommendedName>
    <alternativeName>
        <fullName evidence="1">Peptidase M</fullName>
    </alternativeName>
</protein>
<sequence length="358" mass="39975">MKCILLNQAEELPIEFLPKDGVYGKGKLFDSRNMEIENFTESDILQDARRAAEAHRRARYRVQSIVRPGITLLEIVRSIEDSTRTLLKGERNNGIGFPAGMSMNSCAAHYTVNPGEQDIVLKEDDVLKIDFGTHSDGRIMDSAFTVAFKENLEPLLVAAREGTETGIKSLGVDVRVCDIGRDINEVISSYEVEIGGRMWPIRPISDLHGHSISQFRIHGGISIPAVNNRDTTRIKGDSFYAVETFATTGKGSIDDRPPCSHFVLNTYKSRKLFNKDLIKVYEFVKDSLGTLPFSPRHLDYYGLVKGGSLKSVNLLTMMGLLTPYPPLNDIDGCKVAQFEHTVYLSEHGKEVLTRGDDY</sequence>
<evidence type="ECO:0000255" key="1">
    <source>
        <dbReference type="HAMAP-Rule" id="MF_03175"/>
    </source>
</evidence>
<evidence type="ECO:0000269" key="2">
    <source>
    </source>
</evidence>
<evidence type="ECO:0000269" key="3">
    <source>
    </source>
</evidence>
<evidence type="ECO:0000269" key="4">
    <source>
    </source>
</evidence>
<evidence type="ECO:0000269" key="5">
    <source>
    </source>
</evidence>
<evidence type="ECO:0000269" key="6">
    <source>
    </source>
</evidence>
<evidence type="ECO:0007829" key="7">
    <source>
        <dbReference type="PDB" id="3FM3"/>
    </source>
</evidence>
<keyword id="KW-0002">3D-structure</keyword>
<keyword id="KW-0031">Aminopeptidase</keyword>
<keyword id="KW-0963">Cytoplasm</keyword>
<keyword id="KW-0378">Hydrolase</keyword>
<keyword id="KW-0479">Metal-binding</keyword>
<keyword id="KW-0645">Protease</keyword>
<keyword id="KW-1185">Reference proteome</keyword>
<comment type="function">
    <text evidence="1 2 3 5">Cotranslationally removes the N-terminal methionine from nascent proteins. The N-terminal methionine is often cleaved when the second residue in the primary sequence is small and uncharged (Met-Ala-, Cys, Gly, Pro, Ser, Thr, or Val).</text>
</comment>
<comment type="catalytic activity">
    <reaction evidence="1">
        <text>Release of N-terminal amino acids, preferentially methionine, from peptides and arylamides.</text>
        <dbReference type="EC" id="3.4.11.18"/>
    </reaction>
</comment>
<comment type="cofactor">
    <cofactor evidence="1">
        <name>Co(2+)</name>
        <dbReference type="ChEBI" id="CHEBI:48828"/>
    </cofactor>
    <cofactor evidence="1">
        <name>Zn(2+)</name>
        <dbReference type="ChEBI" id="CHEBI:29105"/>
    </cofactor>
    <cofactor evidence="1">
        <name>Mn(2+)</name>
        <dbReference type="ChEBI" id="CHEBI:29035"/>
    </cofactor>
    <cofactor evidence="1">
        <name>Fe(2+)</name>
        <dbReference type="ChEBI" id="CHEBI:29033"/>
    </cofactor>
    <text evidence="1">Binds 2 divalent metal cations per subunit. Has a high-affinity and a low affinity metal-binding site. The true nature of the physiological cofactor is under debate. The enzyme is active with cobalt, zinc, manganese or divalent iron ions. Most likely, methionine aminopeptidases function as mononuclear Fe(2+)-metalloproteases under physiological conditions, and the catalytically relevant metal-binding site has been assigned to the histidine-containing high-affinity site.</text>
</comment>
<comment type="biophysicochemical properties">
    <kinetics>
        <KM evidence="6">1.95 mM for a Met-Ala-Ser peptide</KM>
        <Vmax evidence="6">7.3 nmol/min/mg enzyme</Vmax>
    </kinetics>
    <phDependence>
        <text evidence="6">Optimum pH is 8.5.</text>
    </phDependence>
    <temperatureDependence>
        <text evidence="6">Optimum temperature is 37 degrees Celsius.</text>
    </temperatureDependence>
</comment>
<comment type="subcellular location">
    <subcellularLocation>
        <location evidence="1">Cytoplasm</location>
    </subcellularLocation>
</comment>
<comment type="developmental stage">
    <text evidence="4">Expressed in late sporogonial stages.</text>
</comment>
<comment type="similarity">
    <text evidence="1">Belongs to the peptidase M24A family. Methionine aminopeptidase eukaryotic type 2 subfamily.</text>
</comment>
<reference key="1">
    <citation type="journal article" date="2005" name="Folia Parasitol.">
        <title>Investigations into microsporidian methionine aminopeptidase type 2: a therapeutic target for microsporidiosis.</title>
        <authorList>
            <person name="Zhang H."/>
            <person name="Huang H."/>
            <person name="Cali A."/>
            <person name="Takvorian P.M."/>
            <person name="Feng X."/>
            <person name="Zhou G."/>
            <person name="Weiss L.M."/>
        </authorList>
    </citation>
    <scope>NUCLEOTIDE SEQUENCE [GENOMIC DNA]</scope>
    <scope>FUNCTION</scope>
</reference>
<reference key="2">
    <citation type="journal article" date="2001" name="Nature">
        <title>Genome sequence and gene compaction of the eukaryote parasite Encephalitozoon cuniculi.</title>
        <authorList>
            <person name="Katinka M.D."/>
            <person name="Duprat S."/>
            <person name="Cornillot E."/>
            <person name="Metenier G."/>
            <person name="Thomarat F."/>
            <person name="Prensier G."/>
            <person name="Barbe V."/>
            <person name="Peyretaillade E."/>
            <person name="Brottier P."/>
            <person name="Wincker P."/>
            <person name="Delbac F."/>
            <person name="El Alaoui H."/>
            <person name="Peyret P."/>
            <person name="Saurin W."/>
            <person name="Gouy M."/>
            <person name="Weissenbach J."/>
            <person name="Vivares C.P."/>
        </authorList>
    </citation>
    <scope>NUCLEOTIDE SEQUENCE [LARGE SCALE GENOMIC DNA]</scope>
    <source>
        <strain>GB-M1</strain>
    </source>
</reference>
<reference key="3">
    <citation type="journal article" date="2005" name="Mol. Biochem. Parasitol.">
        <title>Phylogenetic relationships of methionine aminopeptidase 2 among Encephalitozoon species and genotypes of microsporidia.</title>
        <authorList>
            <person name="Pandrea I."/>
            <person name="Mittleider D."/>
            <person name="Brindley P.J."/>
            <person name="Didier E.S."/>
            <person name="Robertson D.L."/>
        </authorList>
    </citation>
    <scope>NUCLEOTIDE SEQUENCE [GENOMIC DNA] OF 13-349</scope>
    <source>
        <strain>ATCC 50502 / ECIII</strain>
        <strain>ATCC 50503 / ECI</strain>
        <strain>ECII</strain>
    </source>
</reference>
<reference key="4">
    <citation type="journal article" date="2003" name="J. Eukaryot. Microbiol.">
        <title>Characterization of recombinant microsporidian methionine aminopeptidase type 2.</title>
        <authorList>
            <person name="Weiss L.M."/>
            <person name="Zhou G.C."/>
            <person name="Zhang H."/>
        </authorList>
    </citation>
    <scope>FUNCTION</scope>
</reference>
<reference key="5">
    <citation type="journal article" date="2006" name="Antimicrob. Agents Chemother.">
        <title>System for expression of microsporidian methionine amino peptidase type 2 (MetAP2) in the yeast Saccharomyces cerevisiae.</title>
        <authorList>
            <person name="Upadhya R."/>
            <person name="Zhang H.S."/>
            <person name="Weiss L.M."/>
        </authorList>
    </citation>
    <scope>FUNCTION</scope>
    <scope>MUTAGENESIS OF ALA-241</scope>
</reference>
<reference key="6">
    <citation type="journal article" date="2006" name="Proteomics">
        <title>Proteomic analysis of the eukaryotic parasite Encephalitozoon cuniculi (microsporidia): a reference map for proteins expressed in late sporogonial stages.</title>
        <authorList>
            <person name="Brosson D."/>
            <person name="Kuhn L."/>
            <person name="Delbac F."/>
            <person name="Garin J."/>
            <person name="Vivares C.P."/>
            <person name="Texier C."/>
        </authorList>
    </citation>
    <scope>IDENTIFICATION BY MASS SPECTROMETRY [LARGE SCALE ANALYSIS]</scope>
    <scope>DEVELOPMENTAL STAGE</scope>
</reference>
<reference key="7">
    <citation type="journal article" date="2009" name="Mol. Biochem. Parasitol.">
        <title>Structure of a microsporidian methionine aminopeptidase type 2 complexed with fumagillin and TNP-470.</title>
        <authorList>
            <person name="Alvarado J.J."/>
            <person name="Nemkal A."/>
            <person name="Sauder J.M."/>
            <person name="Russell M."/>
            <person name="Akiyoshi D.E."/>
            <person name="Shi W."/>
            <person name="Almo S.C."/>
            <person name="Weiss L.M."/>
        </authorList>
    </citation>
    <scope>X-RAY CRYSTALLOGRAPHY (2.18 ANGSTROMS) IN COMPLEX WITH IRON AND INHIBITOR</scope>
    <scope>BIOPHYSICOCHEMICAL PROPERTIES</scope>
</reference>
<dbReference type="EC" id="3.4.11.18" evidence="1"/>
<dbReference type="EMBL" id="AF440270">
    <property type="protein sequence ID" value="AAM49625.1"/>
    <property type="molecule type" value="Genomic_DNA"/>
</dbReference>
<dbReference type="EMBL" id="AL590449">
    <property type="protein sequence ID" value="CAD25794.1"/>
    <property type="molecule type" value="Genomic_DNA"/>
</dbReference>
<dbReference type="EMBL" id="AY339777">
    <property type="protein sequence ID" value="AAR04551.1"/>
    <property type="molecule type" value="Genomic_DNA"/>
</dbReference>
<dbReference type="EMBL" id="AY339778">
    <property type="protein sequence ID" value="AAR04552.1"/>
    <property type="molecule type" value="Genomic_DNA"/>
</dbReference>
<dbReference type="EMBL" id="AY339779">
    <property type="protein sequence ID" value="AAR04553.1"/>
    <property type="molecule type" value="Genomic_DNA"/>
</dbReference>
<dbReference type="RefSeq" id="NP_586190.1">
    <property type="nucleotide sequence ID" value="NM_001042023.1"/>
</dbReference>
<dbReference type="PDB" id="3FM3">
    <property type="method" value="X-ray"/>
    <property type="resolution" value="2.18 A"/>
    <property type="chains" value="A/B=1-358"/>
</dbReference>
<dbReference type="PDB" id="3FMQ">
    <property type="method" value="X-ray"/>
    <property type="resolution" value="2.50 A"/>
    <property type="chains" value="A/B=1-358"/>
</dbReference>
<dbReference type="PDB" id="3FMR">
    <property type="method" value="X-ray"/>
    <property type="resolution" value="2.89 A"/>
    <property type="chains" value="A/B=1-358"/>
</dbReference>
<dbReference type="PDBsum" id="3FM3"/>
<dbReference type="PDBsum" id="3FMQ"/>
<dbReference type="PDBsum" id="3FMR"/>
<dbReference type="SMR" id="Q8SR45"/>
<dbReference type="FunCoup" id="Q8SR45">
    <property type="interactions" value="283"/>
</dbReference>
<dbReference type="STRING" id="284813.Q8SR45"/>
<dbReference type="DNASU" id="859839"/>
<dbReference type="GeneID" id="859839"/>
<dbReference type="KEGG" id="ecu:ECU10_0750"/>
<dbReference type="VEuPathDB" id="MicrosporidiaDB:ECU10_0750"/>
<dbReference type="HOGENOM" id="CLU_015857_7_0_1"/>
<dbReference type="InParanoid" id="Q8SR45"/>
<dbReference type="OMA" id="ILRYHIH"/>
<dbReference type="OrthoDB" id="7848262at2759"/>
<dbReference type="BRENDA" id="3.4.11.18">
    <property type="organism ID" value="7412"/>
</dbReference>
<dbReference type="SABIO-RK" id="Q8SR45"/>
<dbReference type="EvolutionaryTrace" id="Q8SR45"/>
<dbReference type="PRO" id="PR:Q8SR45"/>
<dbReference type="Proteomes" id="UP000000819">
    <property type="component" value="Chromosome X"/>
</dbReference>
<dbReference type="GO" id="GO:0005737">
    <property type="term" value="C:cytoplasm"/>
    <property type="evidence" value="ECO:0007669"/>
    <property type="project" value="UniProtKB-SubCell"/>
</dbReference>
<dbReference type="GO" id="GO:0004239">
    <property type="term" value="F:initiator methionyl aminopeptidase activity"/>
    <property type="evidence" value="ECO:0007669"/>
    <property type="project" value="UniProtKB-UniRule"/>
</dbReference>
<dbReference type="GO" id="GO:0046872">
    <property type="term" value="F:metal ion binding"/>
    <property type="evidence" value="ECO:0007669"/>
    <property type="project" value="UniProtKB-UniRule"/>
</dbReference>
<dbReference type="GO" id="GO:0070006">
    <property type="term" value="F:metalloaminopeptidase activity"/>
    <property type="evidence" value="ECO:0007669"/>
    <property type="project" value="UniProtKB-UniRule"/>
</dbReference>
<dbReference type="GO" id="GO:0006508">
    <property type="term" value="P:proteolysis"/>
    <property type="evidence" value="ECO:0007669"/>
    <property type="project" value="UniProtKB-KW"/>
</dbReference>
<dbReference type="CDD" id="cd01088">
    <property type="entry name" value="MetAP2"/>
    <property type="match status" value="1"/>
</dbReference>
<dbReference type="Gene3D" id="3.90.230.10">
    <property type="entry name" value="Creatinase/methionine aminopeptidase superfamily"/>
    <property type="match status" value="1"/>
</dbReference>
<dbReference type="Gene3D" id="1.10.10.10">
    <property type="entry name" value="Winged helix-like DNA-binding domain superfamily/Winged helix DNA-binding domain"/>
    <property type="match status" value="1"/>
</dbReference>
<dbReference type="HAMAP" id="MF_03175">
    <property type="entry name" value="MetAP_2_euk"/>
    <property type="match status" value="1"/>
</dbReference>
<dbReference type="InterPro" id="IPR036005">
    <property type="entry name" value="Creatinase/aminopeptidase-like"/>
</dbReference>
<dbReference type="InterPro" id="IPR050247">
    <property type="entry name" value="Met_Aminopeptidase_Type2"/>
</dbReference>
<dbReference type="InterPro" id="IPR000994">
    <property type="entry name" value="Pept_M24"/>
</dbReference>
<dbReference type="InterPro" id="IPR002468">
    <property type="entry name" value="Pept_M24A_MAP2"/>
</dbReference>
<dbReference type="InterPro" id="IPR018349">
    <property type="entry name" value="Pept_M24A_MAP2_BS"/>
</dbReference>
<dbReference type="InterPro" id="IPR036388">
    <property type="entry name" value="WH-like_DNA-bd_sf"/>
</dbReference>
<dbReference type="InterPro" id="IPR036390">
    <property type="entry name" value="WH_DNA-bd_sf"/>
</dbReference>
<dbReference type="NCBIfam" id="TIGR00501">
    <property type="entry name" value="met_pdase_II"/>
    <property type="match status" value="1"/>
</dbReference>
<dbReference type="PANTHER" id="PTHR45777">
    <property type="entry name" value="METHIONINE AMINOPEPTIDASE 2"/>
    <property type="match status" value="1"/>
</dbReference>
<dbReference type="PANTHER" id="PTHR45777:SF2">
    <property type="entry name" value="METHIONINE AMINOPEPTIDASE 2"/>
    <property type="match status" value="1"/>
</dbReference>
<dbReference type="Pfam" id="PF00557">
    <property type="entry name" value="Peptidase_M24"/>
    <property type="match status" value="1"/>
</dbReference>
<dbReference type="SUPFAM" id="SSF55920">
    <property type="entry name" value="Creatinase/aminopeptidase"/>
    <property type="match status" value="1"/>
</dbReference>
<dbReference type="SUPFAM" id="SSF46785">
    <property type="entry name" value="Winged helix' DNA-binding domain"/>
    <property type="match status" value="1"/>
</dbReference>
<dbReference type="PROSITE" id="PS01202">
    <property type="entry name" value="MAP_2"/>
    <property type="match status" value="1"/>
</dbReference>
<feature type="chain" id="PRO_0000148985" description="Methionine aminopeptidase 2">
    <location>
        <begin position="1"/>
        <end position="358"/>
    </location>
</feature>
<feature type="binding site" evidence="1 6">
    <location>
        <position position="109"/>
    </location>
    <ligand>
        <name>substrate</name>
    </ligand>
</feature>
<feature type="binding site" evidence="1 6">
    <location>
        <position position="130"/>
    </location>
    <ligand>
        <name>a divalent metal cation</name>
        <dbReference type="ChEBI" id="CHEBI:60240"/>
        <label>1</label>
    </ligand>
</feature>
<feature type="binding site" evidence="1 6">
    <location>
        <position position="141"/>
    </location>
    <ligand>
        <name>a divalent metal cation</name>
        <dbReference type="ChEBI" id="CHEBI:60240"/>
        <label>1</label>
    </ligand>
</feature>
<feature type="binding site" evidence="1 6">
    <location>
        <position position="141"/>
    </location>
    <ligand>
        <name>a divalent metal cation</name>
        <dbReference type="ChEBI" id="CHEBI:60240"/>
        <label>2</label>
        <note>catalytic</note>
    </ligand>
</feature>
<feature type="binding site" evidence="1 6">
    <location>
        <position position="210"/>
    </location>
    <ligand>
        <name>a divalent metal cation</name>
        <dbReference type="ChEBI" id="CHEBI:60240"/>
        <label>2</label>
        <note>catalytic</note>
    </ligand>
</feature>
<feature type="binding site" evidence="1 6">
    <location>
        <position position="218"/>
    </location>
    <ligand>
        <name>substrate</name>
    </ligand>
</feature>
<feature type="binding site" evidence="1 6">
    <location>
        <position position="243"/>
    </location>
    <ligand>
        <name>a divalent metal cation</name>
        <dbReference type="ChEBI" id="CHEBI:60240"/>
        <label>2</label>
        <note>catalytic</note>
    </ligand>
</feature>
<feature type="binding site" evidence="1 6">
    <location>
        <position position="339"/>
    </location>
    <ligand>
        <name>a divalent metal cation</name>
        <dbReference type="ChEBI" id="CHEBI:60240"/>
        <label>1</label>
    </ligand>
</feature>
<feature type="binding site" evidence="1 6">
    <location>
        <position position="339"/>
    </location>
    <ligand>
        <name>a divalent metal cation</name>
        <dbReference type="ChEBI" id="CHEBI:60240"/>
        <label>2</label>
        <note>catalytic</note>
    </ligand>
</feature>
<feature type="sequence variant" description="In strain: ATCC 50502 / ECIII.">
    <original>L</original>
    <variation>F</variation>
    <location>
        <position position="288"/>
    </location>
</feature>
<feature type="mutagenesis site" description="Abolishes catalytic activity." evidence="5">
    <original>A</original>
    <variation>T</variation>
    <location>
        <position position="241"/>
    </location>
</feature>
<feature type="helix" evidence="7">
    <location>
        <begin position="43"/>
        <end position="65"/>
    </location>
</feature>
<feature type="helix" evidence="7">
    <location>
        <begin position="72"/>
        <end position="86"/>
    </location>
</feature>
<feature type="turn" evidence="7">
    <location>
        <begin position="87"/>
        <end position="89"/>
    </location>
</feature>
<feature type="helix" evidence="7">
    <location>
        <begin position="91"/>
        <end position="94"/>
    </location>
</feature>
<feature type="strand" evidence="7">
    <location>
        <begin position="95"/>
        <end position="103"/>
    </location>
</feature>
<feature type="strand" evidence="7">
    <location>
        <begin position="106"/>
        <end position="108"/>
    </location>
</feature>
<feature type="strand" evidence="7">
    <location>
        <begin position="126"/>
        <end position="135"/>
    </location>
</feature>
<feature type="strand" evidence="7">
    <location>
        <begin position="138"/>
        <end position="147"/>
    </location>
</feature>
<feature type="helix" evidence="7">
    <location>
        <begin position="150"/>
        <end position="152"/>
    </location>
</feature>
<feature type="helix" evidence="7">
    <location>
        <begin position="153"/>
        <end position="169"/>
    </location>
</feature>
<feature type="helix" evidence="7">
    <location>
        <begin position="176"/>
        <end position="187"/>
    </location>
</feature>
<feature type="strand" evidence="7">
    <location>
        <begin position="191"/>
        <end position="193"/>
    </location>
</feature>
<feature type="strand" evidence="7">
    <location>
        <begin position="195"/>
        <end position="200"/>
    </location>
</feature>
<feature type="strand" evidence="7">
    <location>
        <begin position="209"/>
        <end position="213"/>
    </location>
</feature>
<feature type="strand" evidence="7">
    <location>
        <begin position="236"/>
        <end position="249"/>
    </location>
</feature>
<feature type="strand" evidence="7">
    <location>
        <begin position="262"/>
        <end position="264"/>
    </location>
</feature>
<feature type="helix" evidence="7">
    <location>
        <begin position="275"/>
        <end position="287"/>
    </location>
</feature>
<feature type="turn" evidence="7">
    <location>
        <begin position="288"/>
        <end position="290"/>
    </location>
</feature>
<feature type="helix" evidence="7">
    <location>
        <begin position="295"/>
        <end position="300"/>
    </location>
</feature>
<feature type="helix" evidence="7">
    <location>
        <begin position="309"/>
        <end position="317"/>
    </location>
</feature>
<feature type="strand" evidence="7">
    <location>
        <begin position="320"/>
        <end position="323"/>
    </location>
</feature>
<feature type="strand" evidence="7">
    <location>
        <begin position="335"/>
        <end position="345"/>
    </location>
</feature>
<feature type="strand" evidence="7">
    <location>
        <begin position="348"/>
        <end position="353"/>
    </location>
</feature>
<accession>Q8SR45</accession>
<accession>Q6VH17</accession>
<accession>Q6VH18</accession>
<gene>
    <name evidence="1" type="primary">MAP2</name>
    <name type="ordered locus">ECU10_0750</name>
</gene>
<organism>
    <name type="scientific">Encephalitozoon cuniculi (strain GB-M1)</name>
    <name type="common">Microsporidian parasite</name>
    <dbReference type="NCBI Taxonomy" id="284813"/>
    <lineage>
        <taxon>Eukaryota</taxon>
        <taxon>Fungi</taxon>
        <taxon>Fungi incertae sedis</taxon>
        <taxon>Microsporidia</taxon>
        <taxon>Unikaryonidae</taxon>
        <taxon>Encephalitozoon</taxon>
    </lineage>
</organism>
<name>MAP2_ENCCU</name>